<keyword id="KW-0521">NADP</keyword>
<keyword id="KW-0560">Oxidoreductase</keyword>
<keyword id="KW-0627">Porphyrin biosynthesis</keyword>
<comment type="function">
    <text evidence="1">Catalyzes the NADPH-dependent reduction of glutamyl-tRNA(Glu) to glutamate 1-semialdehyde (GSA).</text>
</comment>
<comment type="catalytic activity">
    <reaction evidence="1">
        <text>(S)-4-amino-5-oxopentanoate + tRNA(Glu) + NADP(+) = L-glutamyl-tRNA(Glu) + NADPH + H(+)</text>
        <dbReference type="Rhea" id="RHEA:12344"/>
        <dbReference type="Rhea" id="RHEA-COMP:9663"/>
        <dbReference type="Rhea" id="RHEA-COMP:9680"/>
        <dbReference type="ChEBI" id="CHEBI:15378"/>
        <dbReference type="ChEBI" id="CHEBI:57501"/>
        <dbReference type="ChEBI" id="CHEBI:57783"/>
        <dbReference type="ChEBI" id="CHEBI:58349"/>
        <dbReference type="ChEBI" id="CHEBI:78442"/>
        <dbReference type="ChEBI" id="CHEBI:78520"/>
        <dbReference type="EC" id="1.2.1.70"/>
    </reaction>
</comment>
<comment type="pathway">
    <text evidence="1">Porphyrin-containing compound metabolism; protoporphyrin-IX biosynthesis; 5-aminolevulinate from L-glutamyl-tRNA(Glu): step 1/2.</text>
</comment>
<comment type="subunit">
    <text evidence="1">Homodimer.</text>
</comment>
<comment type="domain">
    <text evidence="1">Possesses an unusual extended V-shaped dimeric structure with each monomer consisting of three distinct domains arranged along a curved 'spinal' alpha-helix. The N-terminal catalytic domain specifically recognizes the glutamate moiety of the substrate. The second domain is the NADPH-binding domain, and the third C-terminal domain is responsible for dimerization.</text>
</comment>
<comment type="miscellaneous">
    <text evidence="1">During catalysis, the active site Cys acts as a nucleophile attacking the alpha-carbonyl group of tRNA-bound glutamate with the formation of a thioester intermediate between enzyme and glutamate, and the concomitant release of tRNA(Glu). The thioester intermediate is finally reduced by direct hydride transfer from NADPH, to form the product GSA.</text>
</comment>
<comment type="similarity">
    <text evidence="1">Belongs to the glutamyl-tRNA reductase family.</text>
</comment>
<comment type="sequence caution" evidence="2">
    <conflict type="erroneous initiation">
        <sequence resource="EMBL-CDS" id="ABA49373"/>
    </conflict>
</comment>
<name>HEM1_BURP1</name>
<organism>
    <name type="scientific">Burkholderia pseudomallei (strain 1710b)</name>
    <dbReference type="NCBI Taxonomy" id="320372"/>
    <lineage>
        <taxon>Bacteria</taxon>
        <taxon>Pseudomonadati</taxon>
        <taxon>Pseudomonadota</taxon>
        <taxon>Betaproteobacteria</taxon>
        <taxon>Burkholderiales</taxon>
        <taxon>Burkholderiaceae</taxon>
        <taxon>Burkholderia</taxon>
        <taxon>pseudomallei group</taxon>
    </lineage>
</organism>
<evidence type="ECO:0000255" key="1">
    <source>
        <dbReference type="HAMAP-Rule" id="MF_00087"/>
    </source>
</evidence>
<evidence type="ECO:0000305" key="2"/>
<dbReference type="EC" id="1.2.1.70" evidence="1"/>
<dbReference type="EMBL" id="CP000124">
    <property type="protein sequence ID" value="ABA49373.1"/>
    <property type="status" value="ALT_INIT"/>
    <property type="molecule type" value="Genomic_DNA"/>
</dbReference>
<dbReference type="RefSeq" id="WP_004521984.1">
    <property type="nucleotide sequence ID" value="NC_007434.1"/>
</dbReference>
<dbReference type="SMR" id="Q3JN88"/>
<dbReference type="EnsemblBacteria" id="ABA49373">
    <property type="protein sequence ID" value="ABA49373"/>
    <property type="gene ID" value="BURPS1710b_3600"/>
</dbReference>
<dbReference type="GeneID" id="93061686"/>
<dbReference type="KEGG" id="bpm:BURPS1710b_3600"/>
<dbReference type="HOGENOM" id="CLU_035113_2_2_4"/>
<dbReference type="UniPathway" id="UPA00251">
    <property type="reaction ID" value="UER00316"/>
</dbReference>
<dbReference type="Proteomes" id="UP000002700">
    <property type="component" value="Chromosome I"/>
</dbReference>
<dbReference type="GO" id="GO:0008883">
    <property type="term" value="F:glutamyl-tRNA reductase activity"/>
    <property type="evidence" value="ECO:0007669"/>
    <property type="project" value="UniProtKB-UniRule"/>
</dbReference>
<dbReference type="GO" id="GO:0050661">
    <property type="term" value="F:NADP binding"/>
    <property type="evidence" value="ECO:0007669"/>
    <property type="project" value="InterPro"/>
</dbReference>
<dbReference type="GO" id="GO:0019353">
    <property type="term" value="P:protoporphyrinogen IX biosynthetic process from glutamate"/>
    <property type="evidence" value="ECO:0007669"/>
    <property type="project" value="TreeGrafter"/>
</dbReference>
<dbReference type="CDD" id="cd05213">
    <property type="entry name" value="NAD_bind_Glutamyl_tRNA_reduct"/>
    <property type="match status" value="1"/>
</dbReference>
<dbReference type="FunFam" id="3.30.460.30:FF:000001">
    <property type="entry name" value="Glutamyl-tRNA reductase"/>
    <property type="match status" value="1"/>
</dbReference>
<dbReference type="FunFam" id="3.40.50.720:FF:000031">
    <property type="entry name" value="Glutamyl-tRNA reductase"/>
    <property type="match status" value="1"/>
</dbReference>
<dbReference type="Gene3D" id="3.30.460.30">
    <property type="entry name" value="Glutamyl-tRNA reductase, N-terminal domain"/>
    <property type="match status" value="1"/>
</dbReference>
<dbReference type="Gene3D" id="3.40.50.720">
    <property type="entry name" value="NAD(P)-binding Rossmann-like Domain"/>
    <property type="match status" value="1"/>
</dbReference>
<dbReference type="HAMAP" id="MF_00087">
    <property type="entry name" value="Glu_tRNA_reductase"/>
    <property type="match status" value="1"/>
</dbReference>
<dbReference type="InterPro" id="IPR000343">
    <property type="entry name" value="4pyrrol_synth_GluRdtase"/>
</dbReference>
<dbReference type="InterPro" id="IPR015896">
    <property type="entry name" value="4pyrrol_synth_GluRdtase_dimer"/>
</dbReference>
<dbReference type="InterPro" id="IPR015895">
    <property type="entry name" value="4pyrrol_synth_GluRdtase_N"/>
</dbReference>
<dbReference type="InterPro" id="IPR018214">
    <property type="entry name" value="GluRdtase_CS"/>
</dbReference>
<dbReference type="InterPro" id="IPR036453">
    <property type="entry name" value="GluRdtase_dimer_dom_sf"/>
</dbReference>
<dbReference type="InterPro" id="IPR036343">
    <property type="entry name" value="GluRdtase_N_sf"/>
</dbReference>
<dbReference type="InterPro" id="IPR036291">
    <property type="entry name" value="NAD(P)-bd_dom_sf"/>
</dbReference>
<dbReference type="InterPro" id="IPR006151">
    <property type="entry name" value="Shikm_DH/Glu-tRNA_Rdtase"/>
</dbReference>
<dbReference type="NCBIfam" id="TIGR01035">
    <property type="entry name" value="hemA"/>
    <property type="match status" value="1"/>
</dbReference>
<dbReference type="PANTHER" id="PTHR43013">
    <property type="entry name" value="GLUTAMYL-TRNA REDUCTASE"/>
    <property type="match status" value="1"/>
</dbReference>
<dbReference type="PANTHER" id="PTHR43013:SF1">
    <property type="entry name" value="GLUTAMYL-TRNA REDUCTASE"/>
    <property type="match status" value="1"/>
</dbReference>
<dbReference type="Pfam" id="PF00745">
    <property type="entry name" value="GlutR_dimer"/>
    <property type="match status" value="1"/>
</dbReference>
<dbReference type="Pfam" id="PF05201">
    <property type="entry name" value="GlutR_N"/>
    <property type="match status" value="1"/>
</dbReference>
<dbReference type="Pfam" id="PF01488">
    <property type="entry name" value="Shikimate_DH"/>
    <property type="match status" value="1"/>
</dbReference>
<dbReference type="PIRSF" id="PIRSF000445">
    <property type="entry name" value="4pyrrol_synth_GluRdtase"/>
    <property type="match status" value="1"/>
</dbReference>
<dbReference type="SUPFAM" id="SSF69742">
    <property type="entry name" value="Glutamyl tRNA-reductase catalytic, N-terminal domain"/>
    <property type="match status" value="1"/>
</dbReference>
<dbReference type="SUPFAM" id="SSF69075">
    <property type="entry name" value="Glutamyl tRNA-reductase dimerization domain"/>
    <property type="match status" value="1"/>
</dbReference>
<dbReference type="SUPFAM" id="SSF51735">
    <property type="entry name" value="NAD(P)-binding Rossmann-fold domains"/>
    <property type="match status" value="1"/>
</dbReference>
<dbReference type="PROSITE" id="PS00747">
    <property type="entry name" value="GLUTR"/>
    <property type="match status" value="1"/>
</dbReference>
<proteinExistence type="inferred from homology"/>
<gene>
    <name evidence="1" type="primary">hemA</name>
    <name type="ordered locus">BURPS1710b_3600</name>
</gene>
<sequence>MQLLTIGINHHTAPVALRERVAFPLEQIKPALSTFKSVFLGHPAPNAPEAAILSTCNRTELYCATNDRAARDAAIRWMSDYHRIPADELAPHVYALPQSEAVRHAFRVASGLDSMVLGETQILGQMKNAVRTASEAGSLGTYLNQLFQRTFAVAKEVRGTTEIGAQSVSMAAAAVRLAQRIFEQVAQQRVLFIGAGEMIELCATHFAAQGPRELVVANRTAERGAKLAERFGGRAMPLADLPARMHEFDIIVSCTASTLPIIGLGAVERAVKARRHRPIFMVDLAVPRDIEPEVGKLKDVFLYTVDDLGAIVREGNASRQAAVAQAEAIIETRVQNFMQWLDARSIVPVIRHMHTQADALRRAEVERARKMLARGDDPDAVLDALSQALTNKLIHGPTSALNRANGADRDSLIDLMRGFYQHAPRSSDTSDR</sequence>
<protein>
    <recommendedName>
        <fullName evidence="1">Glutamyl-tRNA reductase</fullName>
        <shortName evidence="1">GluTR</shortName>
        <ecNumber evidence="1">1.2.1.70</ecNumber>
    </recommendedName>
</protein>
<feature type="chain" id="PRO_0000335017" description="Glutamyl-tRNA reductase">
    <location>
        <begin position="1"/>
        <end position="432"/>
    </location>
</feature>
<feature type="active site" description="Nucleophile" evidence="1">
    <location>
        <position position="56"/>
    </location>
</feature>
<feature type="binding site" evidence="1">
    <location>
        <begin position="55"/>
        <end position="58"/>
    </location>
    <ligand>
        <name>substrate</name>
    </ligand>
</feature>
<feature type="binding site" evidence="1">
    <location>
        <position position="114"/>
    </location>
    <ligand>
        <name>substrate</name>
    </ligand>
</feature>
<feature type="binding site" evidence="1">
    <location>
        <begin position="119"/>
        <end position="121"/>
    </location>
    <ligand>
        <name>substrate</name>
    </ligand>
</feature>
<feature type="binding site" evidence="1">
    <location>
        <position position="125"/>
    </location>
    <ligand>
        <name>substrate</name>
    </ligand>
</feature>
<feature type="binding site" evidence="1">
    <location>
        <begin position="194"/>
        <end position="199"/>
    </location>
    <ligand>
        <name>NADP(+)</name>
        <dbReference type="ChEBI" id="CHEBI:58349"/>
    </ligand>
</feature>
<feature type="site" description="Important for activity" evidence="1">
    <location>
        <position position="104"/>
    </location>
</feature>
<reference key="1">
    <citation type="journal article" date="2010" name="Genome Biol. Evol.">
        <title>Continuing evolution of Burkholderia mallei through genome reduction and large-scale rearrangements.</title>
        <authorList>
            <person name="Losada L."/>
            <person name="Ronning C.M."/>
            <person name="DeShazer D."/>
            <person name="Woods D."/>
            <person name="Fedorova N."/>
            <person name="Kim H.S."/>
            <person name="Shabalina S.A."/>
            <person name="Pearson T.R."/>
            <person name="Brinkac L."/>
            <person name="Tan P."/>
            <person name="Nandi T."/>
            <person name="Crabtree J."/>
            <person name="Badger J."/>
            <person name="Beckstrom-Sternberg S."/>
            <person name="Saqib M."/>
            <person name="Schutzer S.E."/>
            <person name="Keim P."/>
            <person name="Nierman W.C."/>
        </authorList>
    </citation>
    <scope>NUCLEOTIDE SEQUENCE [LARGE SCALE GENOMIC DNA]</scope>
    <source>
        <strain>1710b</strain>
    </source>
</reference>
<accession>Q3JN88</accession>